<feature type="chain" id="PRO_1000088051" description="Pyridoxal 5'-phosphate synthase subunit PdxT">
    <location>
        <begin position="1"/>
        <end position="207"/>
    </location>
</feature>
<feature type="active site" description="Nucleophile" evidence="1">
    <location>
        <position position="83"/>
    </location>
</feature>
<feature type="active site" description="Charge relay system" evidence="1">
    <location>
        <position position="184"/>
    </location>
</feature>
<feature type="active site" description="Charge relay system" evidence="1">
    <location>
        <position position="186"/>
    </location>
</feature>
<feature type="binding site" evidence="1">
    <location>
        <begin position="51"/>
        <end position="53"/>
    </location>
    <ligand>
        <name>L-glutamine</name>
        <dbReference type="ChEBI" id="CHEBI:58359"/>
    </ligand>
</feature>
<feature type="binding site" evidence="1">
    <location>
        <position position="112"/>
    </location>
    <ligand>
        <name>L-glutamine</name>
        <dbReference type="ChEBI" id="CHEBI:58359"/>
    </ligand>
</feature>
<feature type="binding site" evidence="1">
    <location>
        <begin position="143"/>
        <end position="144"/>
    </location>
    <ligand>
        <name>L-glutamine</name>
        <dbReference type="ChEBI" id="CHEBI:58359"/>
    </ligand>
</feature>
<gene>
    <name evidence="1" type="primary">pdxT</name>
    <name type="ordered locus">Krad_3058</name>
</gene>
<proteinExistence type="inferred from homology"/>
<evidence type="ECO:0000255" key="1">
    <source>
        <dbReference type="HAMAP-Rule" id="MF_01615"/>
    </source>
</evidence>
<protein>
    <recommendedName>
        <fullName evidence="1">Pyridoxal 5'-phosphate synthase subunit PdxT</fullName>
        <ecNumber evidence="1">4.3.3.6</ecNumber>
    </recommendedName>
    <alternativeName>
        <fullName evidence="1">Pdx2</fullName>
    </alternativeName>
    <alternativeName>
        <fullName evidence="1">Pyridoxal 5'-phosphate synthase glutaminase subunit</fullName>
        <ecNumber evidence="1">3.5.1.2</ecNumber>
    </alternativeName>
</protein>
<accession>A6WCI3</accession>
<name>PDXT_KINRD</name>
<organism>
    <name type="scientific">Kineococcus radiotolerans (strain ATCC BAA-149 / DSM 14245 / SRS30216)</name>
    <dbReference type="NCBI Taxonomy" id="266940"/>
    <lineage>
        <taxon>Bacteria</taxon>
        <taxon>Bacillati</taxon>
        <taxon>Actinomycetota</taxon>
        <taxon>Actinomycetes</taxon>
        <taxon>Kineosporiales</taxon>
        <taxon>Kineosporiaceae</taxon>
        <taxon>Kineococcus</taxon>
    </lineage>
</organism>
<comment type="function">
    <text evidence="1">Catalyzes the hydrolysis of glutamine to glutamate and ammonia as part of the biosynthesis of pyridoxal 5'-phosphate. The resulting ammonia molecule is channeled to the active site of PdxS.</text>
</comment>
<comment type="catalytic activity">
    <reaction evidence="1">
        <text>aldehydo-D-ribose 5-phosphate + D-glyceraldehyde 3-phosphate + L-glutamine = pyridoxal 5'-phosphate + L-glutamate + phosphate + 3 H2O + H(+)</text>
        <dbReference type="Rhea" id="RHEA:31507"/>
        <dbReference type="ChEBI" id="CHEBI:15377"/>
        <dbReference type="ChEBI" id="CHEBI:15378"/>
        <dbReference type="ChEBI" id="CHEBI:29985"/>
        <dbReference type="ChEBI" id="CHEBI:43474"/>
        <dbReference type="ChEBI" id="CHEBI:58273"/>
        <dbReference type="ChEBI" id="CHEBI:58359"/>
        <dbReference type="ChEBI" id="CHEBI:59776"/>
        <dbReference type="ChEBI" id="CHEBI:597326"/>
        <dbReference type="EC" id="4.3.3.6"/>
    </reaction>
</comment>
<comment type="catalytic activity">
    <reaction evidence="1">
        <text>L-glutamine + H2O = L-glutamate + NH4(+)</text>
        <dbReference type="Rhea" id="RHEA:15889"/>
        <dbReference type="ChEBI" id="CHEBI:15377"/>
        <dbReference type="ChEBI" id="CHEBI:28938"/>
        <dbReference type="ChEBI" id="CHEBI:29985"/>
        <dbReference type="ChEBI" id="CHEBI:58359"/>
        <dbReference type="EC" id="3.5.1.2"/>
    </reaction>
</comment>
<comment type="pathway">
    <text evidence="1">Cofactor biosynthesis; pyridoxal 5'-phosphate biosynthesis.</text>
</comment>
<comment type="subunit">
    <text evidence="1">In the presence of PdxS, forms a dodecamer of heterodimers. Only shows activity in the heterodimer.</text>
</comment>
<comment type="similarity">
    <text evidence="1">Belongs to the glutaminase PdxT/SNO family.</text>
</comment>
<reference key="1">
    <citation type="journal article" date="2008" name="PLoS ONE">
        <title>Survival in nuclear waste, extreme resistance, and potential applications gleaned from the genome sequence of Kineococcus radiotolerans SRS30216.</title>
        <authorList>
            <person name="Bagwell C.E."/>
            <person name="Bhat S."/>
            <person name="Hawkins G.M."/>
            <person name="Smith B.W."/>
            <person name="Biswas T."/>
            <person name="Hoover T.R."/>
            <person name="Saunders E."/>
            <person name="Han C.S."/>
            <person name="Tsodikov O.V."/>
            <person name="Shimkets L.J."/>
        </authorList>
    </citation>
    <scope>NUCLEOTIDE SEQUENCE [LARGE SCALE GENOMIC DNA]</scope>
    <source>
        <strain>ATCC BAA-149 / DSM 14245 / SRS30216</strain>
    </source>
</reference>
<keyword id="KW-0315">Glutamine amidotransferase</keyword>
<keyword id="KW-0378">Hydrolase</keyword>
<keyword id="KW-0456">Lyase</keyword>
<keyword id="KW-0663">Pyridoxal phosphate</keyword>
<keyword id="KW-1185">Reference proteome</keyword>
<sequence length="207" mass="22256">MTSPAPTIGVLALQGDVREHVAALEAGGARAVTVRRVAELRGVDGLVLPGGESTTIDRLLRVFELREVLRERIAEGLPVYGSCAGMILLADRVLDGAPDQQTLGGLDVTVRRNAFGRQVDSWEEDLPLPEITRGGPPVEGIFIRAPWVEEAGEEVRVLARLGSGPAAGRIVAVRQGDLLATSFHPEITGDDRVHRYFVDVVRERVAG</sequence>
<dbReference type="EC" id="4.3.3.6" evidence="1"/>
<dbReference type="EC" id="3.5.1.2" evidence="1"/>
<dbReference type="EMBL" id="CP000750">
    <property type="protein sequence ID" value="ABS04522.1"/>
    <property type="molecule type" value="Genomic_DNA"/>
</dbReference>
<dbReference type="RefSeq" id="WP_012087227.1">
    <property type="nucleotide sequence ID" value="NC_009664.2"/>
</dbReference>
<dbReference type="SMR" id="A6WCI3"/>
<dbReference type="STRING" id="266940.Krad_3058"/>
<dbReference type="MEROPS" id="C26.A32"/>
<dbReference type="KEGG" id="kra:Krad_3058"/>
<dbReference type="eggNOG" id="COG0311">
    <property type="taxonomic scope" value="Bacteria"/>
</dbReference>
<dbReference type="HOGENOM" id="CLU_069674_2_0_11"/>
<dbReference type="OrthoDB" id="9810320at2"/>
<dbReference type="UniPathway" id="UPA00245"/>
<dbReference type="Proteomes" id="UP000001116">
    <property type="component" value="Chromosome"/>
</dbReference>
<dbReference type="GO" id="GO:0005829">
    <property type="term" value="C:cytosol"/>
    <property type="evidence" value="ECO:0007669"/>
    <property type="project" value="TreeGrafter"/>
</dbReference>
<dbReference type="GO" id="GO:1903600">
    <property type="term" value="C:glutaminase complex"/>
    <property type="evidence" value="ECO:0007669"/>
    <property type="project" value="TreeGrafter"/>
</dbReference>
<dbReference type="GO" id="GO:0004359">
    <property type="term" value="F:glutaminase activity"/>
    <property type="evidence" value="ECO:0007669"/>
    <property type="project" value="UniProtKB-UniRule"/>
</dbReference>
<dbReference type="GO" id="GO:0036381">
    <property type="term" value="F:pyridoxal 5'-phosphate synthase (glutamine hydrolysing) activity"/>
    <property type="evidence" value="ECO:0007669"/>
    <property type="project" value="UniProtKB-UniRule"/>
</dbReference>
<dbReference type="GO" id="GO:0006543">
    <property type="term" value="P:glutamine catabolic process"/>
    <property type="evidence" value="ECO:0007669"/>
    <property type="project" value="UniProtKB-UniRule"/>
</dbReference>
<dbReference type="GO" id="GO:0042823">
    <property type="term" value="P:pyridoxal phosphate biosynthetic process"/>
    <property type="evidence" value="ECO:0007669"/>
    <property type="project" value="UniProtKB-UniRule"/>
</dbReference>
<dbReference type="GO" id="GO:0008614">
    <property type="term" value="P:pyridoxine metabolic process"/>
    <property type="evidence" value="ECO:0007669"/>
    <property type="project" value="TreeGrafter"/>
</dbReference>
<dbReference type="CDD" id="cd01749">
    <property type="entry name" value="GATase1_PB"/>
    <property type="match status" value="1"/>
</dbReference>
<dbReference type="FunFam" id="3.40.50.880:FF:000010">
    <property type="entry name" value="uncharacterized protein LOC100176842 isoform X2"/>
    <property type="match status" value="1"/>
</dbReference>
<dbReference type="Gene3D" id="3.40.50.880">
    <property type="match status" value="1"/>
</dbReference>
<dbReference type="HAMAP" id="MF_01615">
    <property type="entry name" value="PdxT"/>
    <property type="match status" value="1"/>
</dbReference>
<dbReference type="InterPro" id="IPR029062">
    <property type="entry name" value="Class_I_gatase-like"/>
</dbReference>
<dbReference type="InterPro" id="IPR002161">
    <property type="entry name" value="PdxT/SNO"/>
</dbReference>
<dbReference type="InterPro" id="IPR021196">
    <property type="entry name" value="PdxT/SNO_CS"/>
</dbReference>
<dbReference type="NCBIfam" id="TIGR03800">
    <property type="entry name" value="PLP_synth_Pdx2"/>
    <property type="match status" value="1"/>
</dbReference>
<dbReference type="PANTHER" id="PTHR31559">
    <property type="entry name" value="PYRIDOXAL 5'-PHOSPHATE SYNTHASE SUBUNIT SNO"/>
    <property type="match status" value="1"/>
</dbReference>
<dbReference type="PANTHER" id="PTHR31559:SF0">
    <property type="entry name" value="PYRIDOXAL 5'-PHOSPHATE SYNTHASE SUBUNIT SNO1-RELATED"/>
    <property type="match status" value="1"/>
</dbReference>
<dbReference type="Pfam" id="PF01174">
    <property type="entry name" value="SNO"/>
    <property type="match status" value="1"/>
</dbReference>
<dbReference type="PIRSF" id="PIRSF005639">
    <property type="entry name" value="Glut_amidoT_SNO"/>
    <property type="match status" value="1"/>
</dbReference>
<dbReference type="SUPFAM" id="SSF52317">
    <property type="entry name" value="Class I glutamine amidotransferase-like"/>
    <property type="match status" value="1"/>
</dbReference>
<dbReference type="PROSITE" id="PS01236">
    <property type="entry name" value="PDXT_SNO_1"/>
    <property type="match status" value="1"/>
</dbReference>
<dbReference type="PROSITE" id="PS51130">
    <property type="entry name" value="PDXT_SNO_2"/>
    <property type="match status" value="1"/>
</dbReference>